<keyword id="KW-0007">Acetylation</keyword>
<keyword id="KW-0963">Cytoplasm</keyword>
<keyword id="KW-0648">Protein biosynthesis</keyword>
<keyword id="KW-1185">Reference proteome</keyword>
<comment type="function">
    <text evidence="1">Responsible for the release of ribosomes from messenger RNA at the termination of protein biosynthesis. May increase the efficiency of translation by recycling ribosomes from one round of translation to another.</text>
</comment>
<comment type="subcellular location">
    <subcellularLocation>
        <location evidence="1">Cytoplasm</location>
    </subcellularLocation>
</comment>
<comment type="similarity">
    <text evidence="1">Belongs to the RRF family.</text>
</comment>
<feature type="chain" id="PRO_0000167455" description="Ribosome-recycling factor">
    <location>
        <begin position="1"/>
        <end position="185"/>
    </location>
</feature>
<feature type="modified residue" description="N6-acetyllysine" evidence="1">
    <location>
        <position position="162"/>
    </location>
</feature>
<proteinExistence type="inferred from homology"/>
<organism>
    <name type="scientific">Escherichia coli O157:H7</name>
    <dbReference type="NCBI Taxonomy" id="83334"/>
    <lineage>
        <taxon>Bacteria</taxon>
        <taxon>Pseudomonadati</taxon>
        <taxon>Pseudomonadota</taxon>
        <taxon>Gammaproteobacteria</taxon>
        <taxon>Enterobacterales</taxon>
        <taxon>Enterobacteriaceae</taxon>
        <taxon>Escherichia</taxon>
    </lineage>
</organism>
<gene>
    <name evidence="1" type="primary">frr</name>
    <name type="ordered locus">Z0183</name>
    <name type="ordered locus">ECs0174</name>
</gene>
<name>RRF_ECO57</name>
<protein>
    <recommendedName>
        <fullName evidence="1">Ribosome-recycling factor</fullName>
        <shortName evidence="1">RRF</shortName>
    </recommendedName>
    <alternativeName>
        <fullName evidence="1">Ribosome-releasing factor</fullName>
    </alternativeName>
</protein>
<sequence>MISDIRKDAEVRMDKCVEAFKTQISKIRTGRASPSLLDGIVVEYYGTPTPLRQLASVTVEDSRTLKINVFDRSMSPAVEKAIMASDLGLNPNSAGSDIRVPLPPLTEERRKDLTKIVRGEAEQARVAVRNVRRDANDKVKALLKDKEISEDDDRRSQDDVQKLTDAAIKKIEAALADKEAELMQF</sequence>
<reference key="1">
    <citation type="journal article" date="2001" name="Nature">
        <title>Genome sequence of enterohaemorrhagic Escherichia coli O157:H7.</title>
        <authorList>
            <person name="Perna N.T."/>
            <person name="Plunkett G. III"/>
            <person name="Burland V."/>
            <person name="Mau B."/>
            <person name="Glasner J.D."/>
            <person name="Rose D.J."/>
            <person name="Mayhew G.F."/>
            <person name="Evans P.S."/>
            <person name="Gregor J."/>
            <person name="Kirkpatrick H.A."/>
            <person name="Posfai G."/>
            <person name="Hackett J."/>
            <person name="Klink S."/>
            <person name="Boutin A."/>
            <person name="Shao Y."/>
            <person name="Miller L."/>
            <person name="Grotbeck E.J."/>
            <person name="Davis N.W."/>
            <person name="Lim A."/>
            <person name="Dimalanta E.T."/>
            <person name="Potamousis K."/>
            <person name="Apodaca J."/>
            <person name="Anantharaman T.S."/>
            <person name="Lin J."/>
            <person name="Yen G."/>
            <person name="Schwartz D.C."/>
            <person name="Welch R.A."/>
            <person name="Blattner F.R."/>
        </authorList>
    </citation>
    <scope>NUCLEOTIDE SEQUENCE [LARGE SCALE GENOMIC DNA]</scope>
    <source>
        <strain>O157:H7 / EDL933 / ATCC 700927 / EHEC</strain>
    </source>
</reference>
<reference key="2">
    <citation type="journal article" date="2001" name="DNA Res.">
        <title>Complete genome sequence of enterohemorrhagic Escherichia coli O157:H7 and genomic comparison with a laboratory strain K-12.</title>
        <authorList>
            <person name="Hayashi T."/>
            <person name="Makino K."/>
            <person name="Ohnishi M."/>
            <person name="Kurokawa K."/>
            <person name="Ishii K."/>
            <person name="Yokoyama K."/>
            <person name="Han C.-G."/>
            <person name="Ohtsubo E."/>
            <person name="Nakayama K."/>
            <person name="Murata T."/>
            <person name="Tanaka M."/>
            <person name="Tobe T."/>
            <person name="Iida T."/>
            <person name="Takami H."/>
            <person name="Honda T."/>
            <person name="Sasakawa C."/>
            <person name="Ogasawara N."/>
            <person name="Yasunaga T."/>
            <person name="Kuhara S."/>
            <person name="Shiba T."/>
            <person name="Hattori M."/>
            <person name="Shinagawa H."/>
        </authorList>
    </citation>
    <scope>NUCLEOTIDE SEQUENCE [LARGE SCALE GENOMIC DNA]</scope>
    <source>
        <strain>O157:H7 / Sakai / RIMD 0509952 / EHEC</strain>
    </source>
</reference>
<dbReference type="EMBL" id="AE005174">
    <property type="protein sequence ID" value="AAG54474.1"/>
    <property type="molecule type" value="Genomic_DNA"/>
</dbReference>
<dbReference type="EMBL" id="BA000007">
    <property type="protein sequence ID" value="BAB33597.1"/>
    <property type="molecule type" value="Genomic_DNA"/>
</dbReference>
<dbReference type="PIR" id="F85501">
    <property type="entry name" value="F85501"/>
</dbReference>
<dbReference type="PIR" id="F90650">
    <property type="entry name" value="F90650"/>
</dbReference>
<dbReference type="RefSeq" id="NP_308201.1">
    <property type="nucleotide sequence ID" value="NC_002695.1"/>
</dbReference>
<dbReference type="RefSeq" id="WP_000622418.1">
    <property type="nucleotide sequence ID" value="NZ_VOAI01000002.1"/>
</dbReference>
<dbReference type="SMR" id="P0A807"/>
<dbReference type="STRING" id="155864.Z0183"/>
<dbReference type="GeneID" id="913872"/>
<dbReference type="GeneID" id="93777253"/>
<dbReference type="KEGG" id="ece:Z0183"/>
<dbReference type="KEGG" id="ecs:ECs_0174"/>
<dbReference type="PATRIC" id="fig|386585.9.peg.276"/>
<dbReference type="eggNOG" id="COG0233">
    <property type="taxonomic scope" value="Bacteria"/>
</dbReference>
<dbReference type="HOGENOM" id="CLU_073981_2_1_6"/>
<dbReference type="OMA" id="FNPMNNG"/>
<dbReference type="Proteomes" id="UP000000558">
    <property type="component" value="Chromosome"/>
</dbReference>
<dbReference type="Proteomes" id="UP000002519">
    <property type="component" value="Chromosome"/>
</dbReference>
<dbReference type="GO" id="GO:0005829">
    <property type="term" value="C:cytosol"/>
    <property type="evidence" value="ECO:0007669"/>
    <property type="project" value="GOC"/>
</dbReference>
<dbReference type="GO" id="GO:0043023">
    <property type="term" value="F:ribosomal large subunit binding"/>
    <property type="evidence" value="ECO:0007669"/>
    <property type="project" value="TreeGrafter"/>
</dbReference>
<dbReference type="GO" id="GO:0002184">
    <property type="term" value="P:cytoplasmic translational termination"/>
    <property type="evidence" value="ECO:0007669"/>
    <property type="project" value="TreeGrafter"/>
</dbReference>
<dbReference type="CDD" id="cd00520">
    <property type="entry name" value="RRF"/>
    <property type="match status" value="1"/>
</dbReference>
<dbReference type="FunFam" id="1.10.132.20:FF:000001">
    <property type="entry name" value="Ribosome-recycling factor"/>
    <property type="match status" value="1"/>
</dbReference>
<dbReference type="FunFam" id="3.30.1360.40:FF:000001">
    <property type="entry name" value="Ribosome-recycling factor"/>
    <property type="match status" value="1"/>
</dbReference>
<dbReference type="Gene3D" id="3.30.1360.40">
    <property type="match status" value="1"/>
</dbReference>
<dbReference type="Gene3D" id="1.10.132.20">
    <property type="entry name" value="Ribosome-recycling factor"/>
    <property type="match status" value="1"/>
</dbReference>
<dbReference type="HAMAP" id="MF_00040">
    <property type="entry name" value="RRF"/>
    <property type="match status" value="1"/>
</dbReference>
<dbReference type="InterPro" id="IPR002661">
    <property type="entry name" value="Ribosome_recyc_fac"/>
</dbReference>
<dbReference type="InterPro" id="IPR023584">
    <property type="entry name" value="Ribosome_recyc_fac_dom"/>
</dbReference>
<dbReference type="InterPro" id="IPR036191">
    <property type="entry name" value="RRF_sf"/>
</dbReference>
<dbReference type="NCBIfam" id="TIGR00496">
    <property type="entry name" value="frr"/>
    <property type="match status" value="1"/>
</dbReference>
<dbReference type="PANTHER" id="PTHR20982:SF3">
    <property type="entry name" value="MITOCHONDRIAL RIBOSOME RECYCLING FACTOR PSEUDO 1"/>
    <property type="match status" value="1"/>
</dbReference>
<dbReference type="PANTHER" id="PTHR20982">
    <property type="entry name" value="RIBOSOME RECYCLING FACTOR"/>
    <property type="match status" value="1"/>
</dbReference>
<dbReference type="Pfam" id="PF01765">
    <property type="entry name" value="RRF"/>
    <property type="match status" value="1"/>
</dbReference>
<dbReference type="SUPFAM" id="SSF55194">
    <property type="entry name" value="Ribosome recycling factor, RRF"/>
    <property type="match status" value="1"/>
</dbReference>
<accession>P0A807</accession>
<accession>P16174</accession>
<evidence type="ECO:0000255" key="1">
    <source>
        <dbReference type="HAMAP-Rule" id="MF_00040"/>
    </source>
</evidence>